<keyword id="KW-0028">Amino-acid biosynthesis</keyword>
<keyword id="KW-0963">Cytoplasm</keyword>
<keyword id="KW-0368">Histidine biosynthesis</keyword>
<keyword id="KW-0413">Isomerase</keyword>
<comment type="catalytic activity">
    <reaction evidence="1">
        <text>1-(5-phospho-beta-D-ribosyl)-5-[(5-phospho-beta-D-ribosylamino)methylideneamino]imidazole-4-carboxamide = 5-[(5-phospho-1-deoxy-D-ribulos-1-ylimino)methylamino]-1-(5-phospho-beta-D-ribosyl)imidazole-4-carboxamide</text>
        <dbReference type="Rhea" id="RHEA:15469"/>
        <dbReference type="ChEBI" id="CHEBI:58435"/>
        <dbReference type="ChEBI" id="CHEBI:58525"/>
        <dbReference type="EC" id="5.3.1.16"/>
    </reaction>
</comment>
<comment type="pathway">
    <text evidence="1">Amino-acid biosynthesis; L-histidine biosynthesis; L-histidine from 5-phospho-alpha-D-ribose 1-diphosphate: step 4/9.</text>
</comment>
<comment type="subcellular location">
    <subcellularLocation>
        <location evidence="1">Cytoplasm</location>
    </subcellularLocation>
</comment>
<comment type="similarity">
    <text evidence="1">Belongs to the HisA/HisF family.</text>
</comment>
<evidence type="ECO:0000255" key="1">
    <source>
        <dbReference type="HAMAP-Rule" id="MF_01014"/>
    </source>
</evidence>
<proteinExistence type="inferred from homology"/>
<gene>
    <name evidence="1" type="primary">hisA</name>
    <name type="ordered locus">Pput_0312</name>
</gene>
<reference key="1">
    <citation type="submission" date="2007-05" db="EMBL/GenBank/DDBJ databases">
        <title>Complete sequence of Pseudomonas putida F1.</title>
        <authorList>
            <consortium name="US DOE Joint Genome Institute"/>
            <person name="Copeland A."/>
            <person name="Lucas S."/>
            <person name="Lapidus A."/>
            <person name="Barry K."/>
            <person name="Detter J.C."/>
            <person name="Glavina del Rio T."/>
            <person name="Hammon N."/>
            <person name="Israni S."/>
            <person name="Dalin E."/>
            <person name="Tice H."/>
            <person name="Pitluck S."/>
            <person name="Chain P."/>
            <person name="Malfatti S."/>
            <person name="Shin M."/>
            <person name="Vergez L."/>
            <person name="Schmutz J."/>
            <person name="Larimer F."/>
            <person name="Land M."/>
            <person name="Hauser L."/>
            <person name="Kyrpides N."/>
            <person name="Lykidis A."/>
            <person name="Parales R."/>
            <person name="Richardson P."/>
        </authorList>
    </citation>
    <scope>NUCLEOTIDE SEQUENCE [LARGE SCALE GENOMIC DNA]</scope>
    <source>
        <strain>ATCC 700007 / DSM 6899 / JCM 31910 / BCRC 17059 / LMG 24140 / F1</strain>
    </source>
</reference>
<protein>
    <recommendedName>
        <fullName evidence="1">1-(5-phosphoribosyl)-5-[(5-phosphoribosylamino)methylideneamino] imidazole-4-carboxamide isomerase</fullName>
        <ecNumber evidence="1">5.3.1.16</ecNumber>
    </recommendedName>
    <alternativeName>
        <fullName evidence="1">Phosphoribosylformimino-5-aminoimidazole carboxamide ribotide isomerase</fullName>
    </alternativeName>
</protein>
<organism>
    <name type="scientific">Pseudomonas putida (strain ATCC 700007 / DSM 6899 / JCM 31910 / BCRC 17059 / LMG 24140 / F1)</name>
    <dbReference type="NCBI Taxonomy" id="351746"/>
    <lineage>
        <taxon>Bacteria</taxon>
        <taxon>Pseudomonadati</taxon>
        <taxon>Pseudomonadota</taxon>
        <taxon>Gammaproteobacteria</taxon>
        <taxon>Pseudomonadales</taxon>
        <taxon>Pseudomonadaceae</taxon>
        <taxon>Pseudomonas</taxon>
    </lineage>
</organism>
<accession>A5VX75</accession>
<dbReference type="EC" id="5.3.1.16" evidence="1"/>
<dbReference type="EMBL" id="CP000712">
    <property type="protein sequence ID" value="ABQ76485.1"/>
    <property type="molecule type" value="Genomic_DNA"/>
</dbReference>
<dbReference type="SMR" id="A5VX75"/>
<dbReference type="KEGG" id="ppf:Pput_0312"/>
<dbReference type="eggNOG" id="COG0106">
    <property type="taxonomic scope" value="Bacteria"/>
</dbReference>
<dbReference type="HOGENOM" id="CLU_048577_1_1_6"/>
<dbReference type="UniPathway" id="UPA00031">
    <property type="reaction ID" value="UER00009"/>
</dbReference>
<dbReference type="GO" id="GO:0005737">
    <property type="term" value="C:cytoplasm"/>
    <property type="evidence" value="ECO:0007669"/>
    <property type="project" value="UniProtKB-SubCell"/>
</dbReference>
<dbReference type="GO" id="GO:0003949">
    <property type="term" value="F:1-(5-phosphoribosyl)-5-[(5-phosphoribosylamino)methylideneamino]imidazole-4-carboxamide isomerase activity"/>
    <property type="evidence" value="ECO:0007669"/>
    <property type="project" value="UniProtKB-UniRule"/>
</dbReference>
<dbReference type="GO" id="GO:0000105">
    <property type="term" value="P:L-histidine biosynthetic process"/>
    <property type="evidence" value="ECO:0007669"/>
    <property type="project" value="UniProtKB-UniRule"/>
</dbReference>
<dbReference type="GO" id="GO:0000162">
    <property type="term" value="P:L-tryptophan biosynthetic process"/>
    <property type="evidence" value="ECO:0007669"/>
    <property type="project" value="TreeGrafter"/>
</dbReference>
<dbReference type="CDD" id="cd04732">
    <property type="entry name" value="HisA"/>
    <property type="match status" value="1"/>
</dbReference>
<dbReference type="FunFam" id="3.20.20.70:FF:000009">
    <property type="entry name" value="1-(5-phosphoribosyl)-5-[(5-phosphoribosylamino)methylideneamino] imidazole-4-carboxamide isomerase"/>
    <property type="match status" value="1"/>
</dbReference>
<dbReference type="Gene3D" id="3.20.20.70">
    <property type="entry name" value="Aldolase class I"/>
    <property type="match status" value="1"/>
</dbReference>
<dbReference type="HAMAP" id="MF_01014">
    <property type="entry name" value="HisA"/>
    <property type="match status" value="1"/>
</dbReference>
<dbReference type="InterPro" id="IPR013785">
    <property type="entry name" value="Aldolase_TIM"/>
</dbReference>
<dbReference type="InterPro" id="IPR006062">
    <property type="entry name" value="His_biosynth"/>
</dbReference>
<dbReference type="InterPro" id="IPR006063">
    <property type="entry name" value="HisA_bact_arch"/>
</dbReference>
<dbReference type="InterPro" id="IPR044524">
    <property type="entry name" value="Isoase_HisA-like"/>
</dbReference>
<dbReference type="InterPro" id="IPR023016">
    <property type="entry name" value="Isoase_HisA-like_bact"/>
</dbReference>
<dbReference type="InterPro" id="IPR011060">
    <property type="entry name" value="RibuloseP-bd_barrel"/>
</dbReference>
<dbReference type="NCBIfam" id="TIGR00007">
    <property type="entry name" value="1-(5-phosphoribosyl)-5-[(5-phosphoribosylamino)methylideneamino]imidazole-4-carboxamide isomerase"/>
    <property type="match status" value="1"/>
</dbReference>
<dbReference type="PANTHER" id="PTHR43090">
    <property type="entry name" value="1-(5-PHOSPHORIBOSYL)-5-[(5-PHOSPHORIBOSYLAMINO)METHYLIDENEAMINO] IMIDAZOLE-4-CARBOXAMIDE ISOMERASE"/>
    <property type="match status" value="1"/>
</dbReference>
<dbReference type="PANTHER" id="PTHR43090:SF2">
    <property type="entry name" value="1-(5-PHOSPHORIBOSYL)-5-[(5-PHOSPHORIBOSYLAMINO)METHYLIDENEAMINO] IMIDAZOLE-4-CARBOXAMIDE ISOMERASE"/>
    <property type="match status" value="1"/>
</dbReference>
<dbReference type="Pfam" id="PF00977">
    <property type="entry name" value="His_biosynth"/>
    <property type="match status" value="1"/>
</dbReference>
<dbReference type="SUPFAM" id="SSF51366">
    <property type="entry name" value="Ribulose-phoshate binding barrel"/>
    <property type="match status" value="1"/>
</dbReference>
<sequence>MLIIPAIDLKDGACVRLRQGRMEDSTVFSDDPVSMAAKWVEGGCRRLHLVDLNGAFEGQPVNGEVVTAIAKRYPNLPIQIGGGIRSLETIEHYVKAGVSYVIIGTKAVKQPEFVAEACKAFPGKVIVGLDAKDGFVATDGWAEVSSVQVIDLARRFEADGVSAIVYTDIAKDGMMQGCNVPFTKALAEATRIPVIASGGIHNLGDIKALLDAKAPGIIGAITGRAIYEGTLDVAEAQAFCDNYQG</sequence>
<name>HIS4_PSEP1</name>
<feature type="chain" id="PRO_1000063227" description="1-(5-phosphoribosyl)-5-[(5-phosphoribosylamino)methylideneamino] imidazole-4-carboxamide isomerase">
    <location>
        <begin position="1"/>
        <end position="245"/>
    </location>
</feature>
<feature type="active site" description="Proton acceptor" evidence="1">
    <location>
        <position position="8"/>
    </location>
</feature>
<feature type="active site" description="Proton donor" evidence="1">
    <location>
        <position position="130"/>
    </location>
</feature>